<keyword id="KW-0002">3D-structure</keyword>
<keyword id="KW-0106">Calcium</keyword>
<keyword id="KW-0903">Direct protein sequencing</keyword>
<keyword id="KW-0378">Hydrolase</keyword>
<keyword id="KW-0479">Metal-binding</keyword>
<keyword id="KW-0482">Metalloprotease</keyword>
<keyword id="KW-0582">Pharmaceutical</keyword>
<keyword id="KW-0645">Protease</keyword>
<keyword id="KW-0677">Repeat</keyword>
<keyword id="KW-0964">Secreted</keyword>
<keyword id="KW-0732">Signal</keyword>
<keyword id="KW-0843">Virulence</keyword>
<keyword id="KW-0862">Zinc</keyword>
<keyword id="KW-0865">Zymogen</keyword>
<dbReference type="EC" id="3.4.24.3" evidence="23"/>
<dbReference type="EMBL" id="D87215">
    <property type="protein sequence ID" value="BAA77453.1"/>
    <property type="molecule type" value="Genomic_DNA"/>
</dbReference>
<dbReference type="EMBL" id="AB026889">
    <property type="protein sequence ID" value="BAA86030.1"/>
    <property type="molecule type" value="Genomic_DNA"/>
</dbReference>
<dbReference type="RefSeq" id="WP_138210331.1">
    <property type="nucleotide sequence ID" value="NZ_CBCRUQ010000005.1"/>
</dbReference>
<dbReference type="PDB" id="1NQD">
    <property type="method" value="X-ray"/>
    <property type="resolution" value="1.65 A"/>
    <property type="chains" value="A/B=1003-1118"/>
</dbReference>
<dbReference type="PDB" id="1NQJ">
    <property type="method" value="X-ray"/>
    <property type="resolution" value="1.00 A"/>
    <property type="chains" value="A/B=1003-1118"/>
</dbReference>
<dbReference type="PDB" id="2O8O">
    <property type="method" value="X-ray"/>
    <property type="resolution" value="1.35 A"/>
    <property type="chains" value="A/B=1003-1118"/>
</dbReference>
<dbReference type="PDB" id="2Y3U">
    <property type="method" value="X-ray"/>
    <property type="resolution" value="2.55 A"/>
    <property type="chains" value="A=119-880"/>
</dbReference>
<dbReference type="PDB" id="2Y50">
    <property type="method" value="X-ray"/>
    <property type="resolution" value="2.80 A"/>
    <property type="chains" value="A=119-880"/>
</dbReference>
<dbReference type="PDB" id="2Y6I">
    <property type="method" value="X-ray"/>
    <property type="resolution" value="3.25 A"/>
    <property type="chains" value="A=119-880"/>
</dbReference>
<dbReference type="PDB" id="2Y72">
    <property type="method" value="X-ray"/>
    <property type="resolution" value="1.18 A"/>
    <property type="chains" value="A/B=799-880"/>
</dbReference>
<dbReference type="PDB" id="4AQO">
    <property type="method" value="X-ray"/>
    <property type="resolution" value="0.99 A"/>
    <property type="chains" value="A=792-880"/>
</dbReference>
<dbReference type="PDB" id="4ARE">
    <property type="method" value="X-ray"/>
    <property type="resolution" value="2.19 A"/>
    <property type="chains" value="A=119-789"/>
</dbReference>
<dbReference type="PDB" id="4HPK">
    <property type="method" value="X-ray"/>
    <property type="resolution" value="1.35 A"/>
    <property type="chains" value="A=1006-1118, B=1003-1118"/>
</dbReference>
<dbReference type="PDB" id="4JRW">
    <property type="method" value="X-ray"/>
    <property type="resolution" value="1.60 A"/>
    <property type="chains" value="A/B=797-881"/>
</dbReference>
<dbReference type="PDB" id="4TN9">
    <property type="method" value="X-ray"/>
    <property type="resolution" value="1.40 A"/>
    <property type="chains" value="A/B=797-881"/>
</dbReference>
<dbReference type="PDB" id="5IKU">
    <property type="method" value="X-ray"/>
    <property type="resolution" value="1.90 A"/>
    <property type="chains" value="A=883-1118"/>
</dbReference>
<dbReference type="PDB" id="7Z5U">
    <property type="method" value="X-ray"/>
    <property type="resolution" value="1.80 A"/>
    <property type="chains" value="A=398-790"/>
</dbReference>
<dbReference type="PDB" id="7ZBV">
    <property type="method" value="X-ray"/>
    <property type="resolution" value="1.95 A"/>
    <property type="chains" value="A=398-790"/>
</dbReference>
<dbReference type="PDBsum" id="1NQD"/>
<dbReference type="PDBsum" id="1NQJ"/>
<dbReference type="PDBsum" id="2O8O"/>
<dbReference type="PDBsum" id="2Y3U"/>
<dbReference type="PDBsum" id="2Y50"/>
<dbReference type="PDBsum" id="2Y6I"/>
<dbReference type="PDBsum" id="2Y72"/>
<dbReference type="PDBsum" id="4AQO"/>
<dbReference type="PDBsum" id="4ARE"/>
<dbReference type="PDBsum" id="4HPK"/>
<dbReference type="PDBsum" id="4JRW"/>
<dbReference type="PDBsum" id="4TN9"/>
<dbReference type="PDBsum" id="5IKU"/>
<dbReference type="PDBsum" id="7Z5U"/>
<dbReference type="PDBsum" id="7ZBV"/>
<dbReference type="SASBDB" id="Q9X721"/>
<dbReference type="SMR" id="Q9X721"/>
<dbReference type="BindingDB" id="Q9X721"/>
<dbReference type="ChEMBL" id="CHEMBL2268009"/>
<dbReference type="Allergome" id="5989">
    <property type="allergen name" value="Clo hi Collagenase"/>
</dbReference>
<dbReference type="MEROPS" id="M09.002"/>
<dbReference type="OrthoDB" id="9798386at2"/>
<dbReference type="BRENDA" id="3.4.24.3">
    <property type="organism ID" value="1481"/>
</dbReference>
<dbReference type="EvolutionaryTrace" id="Q9X721"/>
<dbReference type="GO" id="GO:0005576">
    <property type="term" value="C:extracellular region"/>
    <property type="evidence" value="ECO:0000314"/>
    <property type="project" value="UniProtKB"/>
</dbReference>
<dbReference type="GO" id="GO:0005509">
    <property type="term" value="F:calcium ion binding"/>
    <property type="evidence" value="ECO:0000314"/>
    <property type="project" value="UniProtKB"/>
</dbReference>
<dbReference type="GO" id="GO:0005518">
    <property type="term" value="F:collagen binding"/>
    <property type="evidence" value="ECO:0000314"/>
    <property type="project" value="UniProtKB"/>
</dbReference>
<dbReference type="GO" id="GO:0004175">
    <property type="term" value="F:endopeptidase activity"/>
    <property type="evidence" value="ECO:0000314"/>
    <property type="project" value="UniProtKB"/>
</dbReference>
<dbReference type="GO" id="GO:0004222">
    <property type="term" value="F:metalloendopeptidase activity"/>
    <property type="evidence" value="ECO:0000315"/>
    <property type="project" value="UniProtKB"/>
</dbReference>
<dbReference type="GO" id="GO:0034701">
    <property type="term" value="F:tripeptidase activity"/>
    <property type="evidence" value="ECO:0000314"/>
    <property type="project" value="UniProtKB"/>
</dbReference>
<dbReference type="GO" id="GO:0008270">
    <property type="term" value="F:zinc ion binding"/>
    <property type="evidence" value="ECO:0000314"/>
    <property type="project" value="UniProtKB"/>
</dbReference>
<dbReference type="GO" id="GO:0032963">
    <property type="term" value="P:collagen metabolic process"/>
    <property type="evidence" value="ECO:0000314"/>
    <property type="project" value="UniProtKB"/>
</dbReference>
<dbReference type="GO" id="GO:0006508">
    <property type="term" value="P:proteolysis"/>
    <property type="evidence" value="ECO:0007669"/>
    <property type="project" value="UniProtKB-KW"/>
</dbReference>
<dbReference type="CDD" id="cd00146">
    <property type="entry name" value="PKD"/>
    <property type="match status" value="1"/>
</dbReference>
<dbReference type="FunFam" id="2.60.40.10:FF:000270">
    <property type="entry name" value="Cell surface protein"/>
    <property type="match status" value="1"/>
</dbReference>
<dbReference type="FunFam" id="2.60.120.380:FF:000012">
    <property type="entry name" value="Microbial collagenase"/>
    <property type="match status" value="1"/>
</dbReference>
<dbReference type="FunFam" id="3.30.980.50:FF:000001">
    <property type="entry name" value="Microbial collagenase"/>
    <property type="match status" value="1"/>
</dbReference>
<dbReference type="Gene3D" id="1.10.390.20">
    <property type="match status" value="1"/>
</dbReference>
<dbReference type="Gene3D" id="2.60.120.380">
    <property type="match status" value="2"/>
</dbReference>
<dbReference type="Gene3D" id="3.30.980.50">
    <property type="match status" value="1"/>
</dbReference>
<dbReference type="Gene3D" id="3.40.30.160">
    <property type="entry name" value="Collagenase ColT, N-terminal domain"/>
    <property type="match status" value="1"/>
</dbReference>
<dbReference type="Gene3D" id="2.60.40.10">
    <property type="entry name" value="Immunoglobulins"/>
    <property type="match status" value="1"/>
</dbReference>
<dbReference type="InterPro" id="IPR041379">
    <property type="entry name" value="ColG_subdomain"/>
</dbReference>
<dbReference type="InterPro" id="IPR013783">
    <property type="entry name" value="Ig-like_fold"/>
</dbReference>
<dbReference type="InterPro" id="IPR007280">
    <property type="entry name" value="Peptidase_C_arc/bac"/>
</dbReference>
<dbReference type="InterPro" id="IPR013661">
    <property type="entry name" value="Peptidase_M9_N_dom"/>
</dbReference>
<dbReference type="InterPro" id="IPR002169">
    <property type="entry name" value="Peptidase_M9A/M9B"/>
</dbReference>
<dbReference type="InterPro" id="IPR022409">
    <property type="entry name" value="PKD/Chitinase_dom"/>
</dbReference>
<dbReference type="InterPro" id="IPR000601">
    <property type="entry name" value="PKD_dom"/>
</dbReference>
<dbReference type="InterPro" id="IPR035986">
    <property type="entry name" value="PKD_dom_sf"/>
</dbReference>
<dbReference type="PANTHER" id="PTHR13062">
    <property type="entry name" value="COLLAGENASE"/>
    <property type="match status" value="1"/>
</dbReference>
<dbReference type="PANTHER" id="PTHR13062:SF9">
    <property type="entry name" value="MICROBIAL COLLAGENASE"/>
    <property type="match status" value="1"/>
</dbReference>
<dbReference type="Pfam" id="PF18496">
    <property type="entry name" value="ColG_sub"/>
    <property type="match status" value="1"/>
</dbReference>
<dbReference type="Pfam" id="PF01752">
    <property type="entry name" value="Peptidase_M9"/>
    <property type="match status" value="1"/>
</dbReference>
<dbReference type="Pfam" id="PF08453">
    <property type="entry name" value="Peptidase_M9_N"/>
    <property type="match status" value="1"/>
</dbReference>
<dbReference type="Pfam" id="PF18911">
    <property type="entry name" value="PKD_4"/>
    <property type="match status" value="1"/>
</dbReference>
<dbReference type="Pfam" id="PF04151">
    <property type="entry name" value="PPC"/>
    <property type="match status" value="1"/>
</dbReference>
<dbReference type="PRINTS" id="PR00931">
    <property type="entry name" value="MICOLLPTASE"/>
</dbReference>
<dbReference type="SMART" id="SM00089">
    <property type="entry name" value="PKD"/>
    <property type="match status" value="1"/>
</dbReference>
<dbReference type="SUPFAM" id="SSF89260">
    <property type="entry name" value="Collagen-binding domain"/>
    <property type="match status" value="2"/>
</dbReference>
<dbReference type="SUPFAM" id="SSF49299">
    <property type="entry name" value="PKD domain"/>
    <property type="match status" value="1"/>
</dbReference>
<dbReference type="PROSITE" id="PS50093">
    <property type="entry name" value="PKD"/>
    <property type="match status" value="1"/>
</dbReference>
<dbReference type="PROSITE" id="PS00142">
    <property type="entry name" value="ZINC_PROTEASE"/>
    <property type="match status" value="1"/>
</dbReference>
<accession>Q9X721</accession>
<accession>Q9S0X0</accession>
<sequence>MKKNILKILMDSYSKESKIQTVRRVTSVSLLAVYLTMNTSSLVLAKPIENTNDTSIKNVEKLRNAPNEENSKKVEDSKNDKVEHVKNIEEAKVEQVAPEVKSKSTLRSASIANTNSEKYDFEYLNGLSYTELTNLIKNIKWNQINGLFNYSTGSQKFFGDKNRVQAIINALQESGRTYTANDMKGIETFTEVLRAGFYLGYYNDGLSYLNDRNFQDKCIPAMIAIQKNPNFKLGTAVQDEVITSLGKLIGNASANAEVVNNCVPVLKQFRENLNQYAPDYVKGTAVNELIKGIEFDFSGAAYEKDVKTMPWYGKIDPFINELKALGLYGNITSATEWASDVGIYYLSKFGLYSTNRNDIVQSLEKAVDMYKYGKIAFVAMERITWDYDGIGSNGKKVDHDKFLDDAEKHYLPKTYTFDNGTFIIRAGDKVSEEKIKRLYWASREVKSQFHRVVGNDKALEVGNADDVLTMKIFNSPEEYKFNTNINGVSTDNGGLYIEPRGTFYTYERTPQQSIFSLEELFRHEYTHYLQARYLVDGLWGQGPFYEKNRLTWFDEGTAEFFAGSTRTSGVLPRKSILGYLAKDKVDHRYSLKKTLNSGYDDSDWMFYNYGFAVAHYLYEKDMPTFIKMNKAILNTDVKSYDEIIKKLSDDANKNTEYQNHIQELADKYQGAGIPLVSDDYLKDHGYKKASEVYSEISKAASLTNTSVTAEKSQYFNTFTLRGTYTGETSKGEFKDWDEMSKKLDGTLESLAKNSWSGYKTLTAYFTNYRVTSDNKVQYDVVFHGVLTDNADISNNKAPIAKVTGPSTGAVGRNIEFSGKDSKDEDGKIVSYDWDFGDGATSRGKNSVHAYKKAGTYNVTLKVTDDKGATATESFTIEIKNEDTTTPITKEMEPNDDIKEANGPIVEGVTVKGDLNGSDDADTFYFDVKEDGDVTIELPYSGSSNFTWLVYKEGDDQNHIASGIDKNNSKVGTFKSTKGRHYVFIYKHDSASNISYSLNIKGLGNEKLKEKENNDSSDKATVIPNFNTTMQGSLLGDDSRDYYSFEVKEEGEVNIELDKKDEFGVTWTLHPESNINDRITYGQVDGNKVSNKVKLRPGKYYLLVYKYSGSGNYELRVNK</sequence>
<gene>
    <name evidence="32" type="primary">colG</name>
</gene>
<evidence type="ECO:0000250" key="1">
    <source>
        <dbReference type="UniProtKB" id="Q899Y1"/>
    </source>
</evidence>
<evidence type="ECO:0000255" key="2"/>
<evidence type="ECO:0000255" key="3">
    <source>
        <dbReference type="PROSITE-ProRule" id="PRU00151"/>
    </source>
</evidence>
<evidence type="ECO:0000255" key="4">
    <source>
        <dbReference type="PROSITE-ProRule" id="PRU10095"/>
    </source>
</evidence>
<evidence type="ECO:0000269" key="5">
    <source>
    </source>
</evidence>
<evidence type="ECO:0000269" key="6">
    <source>
    </source>
</evidence>
<evidence type="ECO:0000269" key="7">
    <source>
    </source>
</evidence>
<evidence type="ECO:0000269" key="8">
    <source>
    </source>
</evidence>
<evidence type="ECO:0000269" key="9">
    <source>
    </source>
</evidence>
<evidence type="ECO:0000269" key="10">
    <source>
    </source>
</evidence>
<evidence type="ECO:0000269" key="11">
    <source>
    </source>
</evidence>
<evidence type="ECO:0000269" key="12">
    <source>
    </source>
</evidence>
<evidence type="ECO:0000269" key="13">
    <source>
    </source>
</evidence>
<evidence type="ECO:0000269" key="14">
    <source>
    </source>
</evidence>
<evidence type="ECO:0000269" key="15">
    <source>
    </source>
</evidence>
<evidence type="ECO:0000269" key="16">
    <source>
    </source>
</evidence>
<evidence type="ECO:0000269" key="17">
    <source>
    </source>
</evidence>
<evidence type="ECO:0000269" key="18">
    <source>
    </source>
</evidence>
<evidence type="ECO:0000269" key="19">
    <source>
    </source>
</evidence>
<evidence type="ECO:0000269" key="20">
    <source>
    </source>
</evidence>
<evidence type="ECO:0000269" key="21">
    <source>
    </source>
</evidence>
<evidence type="ECO:0000269" key="22">
    <source>
    </source>
</evidence>
<evidence type="ECO:0000269" key="23">
    <source>
    </source>
</evidence>
<evidence type="ECO:0000269" key="24">
    <source>
    </source>
</evidence>
<evidence type="ECO:0000269" key="25">
    <source>
    </source>
</evidence>
<evidence type="ECO:0000269" key="26">
    <source>
    </source>
</evidence>
<evidence type="ECO:0000269" key="27">
    <source>
    </source>
</evidence>
<evidence type="ECO:0000269" key="28">
    <source ref="21"/>
</evidence>
<evidence type="ECO:0000269" key="29">
    <source ref="27"/>
</evidence>
<evidence type="ECO:0000303" key="30">
    <source>
    </source>
</evidence>
<evidence type="ECO:0000303" key="31">
    <source>
    </source>
</evidence>
<evidence type="ECO:0000303" key="32">
    <source>
    </source>
</evidence>
<evidence type="ECO:0000305" key="33"/>
<evidence type="ECO:0000305" key="34">
    <source>
    </source>
</evidence>
<evidence type="ECO:0000305" key="35">
    <source>
    </source>
</evidence>
<evidence type="ECO:0000305" key="36">
    <source>
    </source>
</evidence>
<evidence type="ECO:0000305" key="37">
    <source>
    </source>
</evidence>
<evidence type="ECO:0000305" key="38">
    <source>
    </source>
</evidence>
<evidence type="ECO:0000305" key="39">
    <source>
    </source>
</evidence>
<evidence type="ECO:0000305" key="40">
    <source>
    </source>
</evidence>
<evidence type="ECO:0007744" key="41">
    <source>
        <dbReference type="PDB" id="1NQD"/>
    </source>
</evidence>
<evidence type="ECO:0007744" key="42">
    <source>
        <dbReference type="PDB" id="1NQJ"/>
    </source>
</evidence>
<evidence type="ECO:0007744" key="43">
    <source>
        <dbReference type="PDB" id="2O8O"/>
    </source>
</evidence>
<evidence type="ECO:0007744" key="44">
    <source>
        <dbReference type="PDB" id="2Y3U"/>
    </source>
</evidence>
<evidence type="ECO:0007744" key="45">
    <source>
        <dbReference type="PDB" id="2Y50"/>
    </source>
</evidence>
<evidence type="ECO:0007744" key="46">
    <source>
        <dbReference type="PDB" id="2Y6I"/>
    </source>
</evidence>
<evidence type="ECO:0007744" key="47">
    <source>
        <dbReference type="PDB" id="2Y72"/>
    </source>
</evidence>
<evidence type="ECO:0007744" key="48">
    <source>
        <dbReference type="PDB" id="4AQO"/>
    </source>
</evidence>
<evidence type="ECO:0007744" key="49">
    <source>
        <dbReference type="PDB" id="4ARE"/>
    </source>
</evidence>
<evidence type="ECO:0007744" key="50">
    <source>
        <dbReference type="PDB" id="4HPK"/>
    </source>
</evidence>
<evidence type="ECO:0007744" key="51">
    <source>
        <dbReference type="PDB" id="4JRW"/>
    </source>
</evidence>
<evidence type="ECO:0007744" key="52">
    <source>
        <dbReference type="PDB" id="4TN9"/>
    </source>
</evidence>
<evidence type="ECO:0007744" key="53">
    <source>
        <dbReference type="PDB" id="5IKU"/>
    </source>
</evidence>
<evidence type="ECO:0007829" key="54">
    <source>
        <dbReference type="PDB" id="1NQJ"/>
    </source>
</evidence>
<evidence type="ECO:0007829" key="55">
    <source>
        <dbReference type="PDB" id="2Y3U"/>
    </source>
</evidence>
<evidence type="ECO:0007829" key="56">
    <source>
        <dbReference type="PDB" id="2Y50"/>
    </source>
</evidence>
<evidence type="ECO:0007829" key="57">
    <source>
        <dbReference type="PDB" id="2Y6I"/>
    </source>
</evidence>
<evidence type="ECO:0007829" key="58">
    <source>
        <dbReference type="PDB" id="4AQO"/>
    </source>
</evidence>
<evidence type="ECO:0007829" key="59">
    <source>
        <dbReference type="PDB" id="4ARE"/>
    </source>
</evidence>
<evidence type="ECO:0007829" key="60">
    <source>
        <dbReference type="PDB" id="4TN9"/>
    </source>
</evidence>
<evidence type="ECO:0007829" key="61">
    <source>
        <dbReference type="PDB" id="5IKU"/>
    </source>
</evidence>
<evidence type="ECO:0007829" key="62">
    <source>
        <dbReference type="PDB" id="7Z5U"/>
    </source>
</evidence>
<evidence type="ECO:0007829" key="63">
    <source>
        <dbReference type="PDB" id="7ZBV"/>
    </source>
</evidence>
<protein>
    <recommendedName>
        <fullName evidence="32">Collagenase ColG</fullName>
        <ecNumber evidence="23">3.4.24.3</ecNumber>
    </recommendedName>
    <alternativeName>
        <fullName evidence="31 32">Class I collagenase</fullName>
    </alternativeName>
    <alternativeName>
        <fullName evidence="32">Gelatinase ColG</fullName>
    </alternativeName>
    <alternativeName>
        <fullName>Microbial collagenase</fullName>
    </alternativeName>
</protein>
<proteinExistence type="evidence at protein level"/>
<feature type="signal peptide" evidence="2">
    <location>
        <begin position="1"/>
        <end position="45"/>
    </location>
</feature>
<feature type="propeptide" id="PRO_0000443545" evidence="40">
    <location>
        <begin position="46"/>
        <end position="110"/>
    </location>
</feature>
<feature type="chain" id="PRO_0000443546" description="Collagenase ColG">
    <location>
        <begin position="111"/>
        <end position="1118"/>
    </location>
</feature>
<feature type="domain" description="PKD" evidence="3">
    <location>
        <begin position="797"/>
        <end position="885"/>
    </location>
</feature>
<feature type="region of interest" description="S1 metalloprotease domain, degrades both FALGPA (furylacryloyl-Leu-Gly-Pro-Ala) and type I collagen" evidence="14 34 40">
    <location>
        <begin position="111"/>
        <end position="786"/>
    </location>
</feature>
<feature type="region of interest" description="Activator domain required for full activity on collagen" evidence="14 38">
    <location>
        <begin position="119"/>
        <end position="388"/>
    </location>
</feature>
<feature type="region of interest" description="Catalytic subdomain" evidence="38">
    <location>
        <begin position="389"/>
        <end position="670"/>
    </location>
</feature>
<feature type="region of interest" description="Degrades soluble FALGPA peptide (furylacryloyl-Leu-Gly-Pro-Ala) but not type I collagen" evidence="14">
    <location>
        <begin position="396"/>
        <end position="1118"/>
    </location>
</feature>
<feature type="region of interest" description="Helper subdomain" evidence="38">
    <location>
        <begin position="679"/>
        <end position="790"/>
    </location>
</feature>
<feature type="region of interest" description="S2 domain" evidence="34 40">
    <location>
        <begin position="787"/>
        <end position="882"/>
    </location>
</feature>
<feature type="region of interest" description="S3a collagen-binding domain" evidence="34 40">
    <location>
        <begin position="886"/>
        <end position="1003"/>
    </location>
</feature>
<feature type="region of interest" description="S3b collagen-binding domain" evidence="8 34 40">
    <location>
        <begin position="1008"/>
        <end position="1118"/>
    </location>
</feature>
<feature type="region of interest" description="Collagen-binding" evidence="8 11">
    <location>
        <begin position="1102"/>
        <end position="1106"/>
    </location>
</feature>
<feature type="active site" evidence="4 34">
    <location>
        <position position="524"/>
    </location>
</feature>
<feature type="binding site" evidence="1 30">
    <location>
        <position position="498"/>
    </location>
    <ligand>
        <name>Ca(2+)</name>
        <dbReference type="ChEBI" id="CHEBI:29108"/>
        <label>1</label>
    </ligand>
</feature>
<feature type="binding site" evidence="4 14 18 45 46 49">
    <location>
        <position position="523"/>
    </location>
    <ligand>
        <name>Zn(2+)</name>
        <dbReference type="ChEBI" id="CHEBI:29105"/>
        <note>catalytic</note>
    </ligand>
</feature>
<feature type="binding site" evidence="4 14 18 45 46 49">
    <location>
        <position position="527"/>
    </location>
    <ligand>
        <name>Zn(2+)</name>
        <dbReference type="ChEBI" id="CHEBI:29105"/>
        <note>catalytic</note>
    </ligand>
</feature>
<feature type="binding site" evidence="1 30">
    <location>
        <position position="531"/>
    </location>
    <ligand>
        <name>Ca(2+)</name>
        <dbReference type="ChEBI" id="CHEBI:29108"/>
        <label>1</label>
    </ligand>
</feature>
<feature type="binding site" evidence="1 30">
    <location>
        <position position="535"/>
    </location>
    <ligand>
        <name>Ca(2+)</name>
        <dbReference type="ChEBI" id="CHEBI:29108"/>
        <label>1</label>
    </ligand>
</feature>
<feature type="binding site" evidence="1 30">
    <location>
        <position position="537"/>
    </location>
    <ligand>
        <name>Ca(2+)</name>
        <dbReference type="ChEBI" id="CHEBI:29108"/>
        <label>1</label>
    </ligand>
</feature>
<feature type="binding site" evidence="14 18 45 46 49">
    <location>
        <position position="555"/>
    </location>
    <ligand>
        <name>Zn(2+)</name>
        <dbReference type="ChEBI" id="CHEBI:29105"/>
        <note>catalytic</note>
    </ligand>
</feature>
<feature type="binding site" evidence="18 48">
    <location>
        <position position="795"/>
    </location>
    <ligand>
        <name>Ca(2+)</name>
        <dbReference type="ChEBI" id="CHEBI:29108"/>
        <label>2</label>
    </ligand>
</feature>
<feature type="binding site" evidence="18 48">
    <location>
        <position position="796"/>
    </location>
    <ligand>
        <name>Ca(2+)</name>
        <dbReference type="ChEBI" id="CHEBI:29108"/>
        <label>2</label>
    </ligand>
</feature>
<feature type="binding site" evidence="18 48">
    <location>
        <position position="823"/>
    </location>
    <ligand>
        <name>Ca(2+)</name>
        <dbReference type="ChEBI" id="CHEBI:29108"/>
        <label>2</label>
    </ligand>
</feature>
<feature type="binding site" evidence="18 48">
    <location>
        <position position="825"/>
    </location>
    <ligand>
        <name>Ca(2+)</name>
        <dbReference type="ChEBI" id="CHEBI:29108"/>
        <label>2</label>
    </ligand>
</feature>
<feature type="binding site" evidence="18 48">
    <location>
        <position position="864"/>
    </location>
    <ligand>
        <name>Ca(2+)</name>
        <dbReference type="ChEBI" id="CHEBI:29108"/>
        <label>2</label>
    </ligand>
</feature>
<feature type="binding site" evidence="53">
    <location>
        <position position="890"/>
    </location>
    <ligand>
        <name>Ca(2+)</name>
        <dbReference type="ChEBI" id="CHEBI:29108"/>
        <label>3</label>
    </ligand>
</feature>
<feature type="binding site" evidence="53">
    <location>
        <position position="892"/>
    </location>
    <ligand>
        <name>Ca(2+)</name>
        <dbReference type="ChEBI" id="CHEBI:29108"/>
        <label>3</label>
    </ligand>
</feature>
<feature type="binding site" evidence="53">
    <location>
        <position position="892"/>
    </location>
    <ligand>
        <name>Ca(2+)</name>
        <dbReference type="ChEBI" id="CHEBI:29108"/>
        <label>4</label>
    </ligand>
</feature>
<feature type="binding site" evidence="53">
    <location>
        <position position="894"/>
    </location>
    <ligand>
        <name>Ca(2+)</name>
        <dbReference type="ChEBI" id="CHEBI:29108"/>
        <label>4</label>
    </ligand>
</feature>
<feature type="binding site" evidence="53">
    <location>
        <position position="913"/>
    </location>
    <ligand>
        <name>Ca(2+)</name>
        <dbReference type="ChEBI" id="CHEBI:29108"/>
        <label>4</label>
    </ligand>
</feature>
<feature type="binding site" evidence="53">
    <location>
        <position position="918"/>
    </location>
    <ligand>
        <name>Ca(2+)</name>
        <dbReference type="ChEBI" id="CHEBI:29108"/>
        <label>3</label>
    </ligand>
</feature>
<feature type="binding site" evidence="53">
    <location>
        <position position="918"/>
    </location>
    <ligand>
        <name>Ca(2+)</name>
        <dbReference type="ChEBI" id="CHEBI:29108"/>
        <label>4</label>
    </ligand>
</feature>
<feature type="binding site" evidence="53">
    <location>
        <position position="920"/>
    </location>
    <ligand>
        <name>Ca(2+)</name>
        <dbReference type="ChEBI" id="CHEBI:29108"/>
        <label>4</label>
    </ligand>
</feature>
<feature type="binding site" evidence="53">
    <location>
        <position position="921"/>
    </location>
    <ligand>
        <name>Ca(2+)</name>
        <dbReference type="ChEBI" id="CHEBI:29108"/>
        <label>3</label>
    </ligand>
</feature>
<feature type="binding site" evidence="53">
    <location>
        <position position="921"/>
    </location>
    <ligand>
        <name>Ca(2+)</name>
        <dbReference type="ChEBI" id="CHEBI:29108"/>
        <label>4</label>
    </ligand>
</feature>
<feature type="binding site" evidence="8 17 41 43 50 53">
    <location>
        <position position="1009"/>
    </location>
    <ligand>
        <name>Ca(2+)</name>
        <dbReference type="ChEBI" id="CHEBI:29108"/>
        <label>5</label>
    </ligand>
</feature>
<feature type="binding site" evidence="8 17 41 43 50 53">
    <location>
        <position position="1011"/>
    </location>
    <ligand>
        <name>Ca(2+)</name>
        <dbReference type="ChEBI" id="CHEBI:29108"/>
        <label>5</label>
    </ligand>
</feature>
<feature type="binding site" evidence="8 17 41 43 50 53">
    <location>
        <position position="1011"/>
    </location>
    <ligand>
        <name>Ca(2+)</name>
        <dbReference type="ChEBI" id="CHEBI:29108"/>
        <label>6</label>
    </ligand>
</feature>
<feature type="binding site" evidence="8 17 41 43 50 53">
    <location>
        <position position="1013"/>
    </location>
    <ligand>
        <name>Ca(2+)</name>
        <dbReference type="ChEBI" id="CHEBI:29108"/>
        <label>6</label>
    </ligand>
</feature>
<feature type="binding site" evidence="8 17 41 43 50">
    <location>
        <position position="1014"/>
    </location>
    <ligand>
        <name>Ca(2+)</name>
        <dbReference type="ChEBI" id="CHEBI:29108"/>
        <label>6</label>
    </ligand>
</feature>
<feature type="binding site" evidence="8 17 41 43 50 53">
    <location>
        <position position="1032"/>
    </location>
    <ligand>
        <name>Ca(2+)</name>
        <dbReference type="ChEBI" id="CHEBI:29108"/>
        <label>5</label>
    </ligand>
</feature>
<feature type="binding site" evidence="8 17 41 43 50 53">
    <location>
        <position position="1037"/>
    </location>
    <ligand>
        <name>Ca(2+)</name>
        <dbReference type="ChEBI" id="CHEBI:29108"/>
        <label>5</label>
    </ligand>
</feature>
<feature type="binding site" evidence="8 17 41 43 50 53">
    <location>
        <position position="1037"/>
    </location>
    <ligand>
        <name>Ca(2+)</name>
        <dbReference type="ChEBI" id="CHEBI:29108"/>
        <label>6</label>
    </ligand>
</feature>
<feature type="binding site" evidence="8 17 41 43 50 53">
    <location>
        <position position="1039"/>
    </location>
    <ligand>
        <name>Ca(2+)</name>
        <dbReference type="ChEBI" id="CHEBI:29108"/>
        <label>6</label>
    </ligand>
</feature>
<feature type="binding site" evidence="8 17 41 43 50 53">
    <location>
        <position position="1040"/>
    </location>
    <ligand>
        <name>Ca(2+)</name>
        <dbReference type="ChEBI" id="CHEBI:29108"/>
        <label>5</label>
    </ligand>
</feature>
<feature type="binding site" evidence="8 17 41 43 50 53">
    <location>
        <position position="1040"/>
    </location>
    <ligand>
        <name>Ca(2+)</name>
        <dbReference type="ChEBI" id="CHEBI:29108"/>
        <label>6</label>
    </ligand>
</feature>
<feature type="site" description="C-terminus of form C1b" evidence="15">
    <location>
        <position position="1006"/>
    </location>
</feature>
<feature type="site" description="C-terminus of form C1c" evidence="15">
    <location>
        <position position="1018"/>
    </location>
</feature>
<feature type="site" description="Collagen binding" evidence="8 11">
    <location>
        <position position="1067"/>
    </location>
</feature>
<feature type="site" description="Collagen binding" evidence="8 11">
    <location>
        <position position="1080"/>
    </location>
</feature>
<feature type="mutagenesis site" description="Degrades soluble FALGPA peptide (furylacryloyl-Leu-Gly-Pro-Ala) but only 40% active on type I collagen." evidence="14">
    <location>
        <begin position="389"/>
        <end position="397"/>
    </location>
</feature>
<feature type="mutagenesis site" description="Retains 4% digestion of collagen, still bind collagen." evidence="6">
    <original>E</original>
    <variation>D</variation>
    <location>
        <position position="524"/>
    </location>
</feature>
<feature type="mutagenesis site" description="S3b fragment has 2.3-fold increased affinity for collagen." evidence="8">
    <original>R</original>
    <variation>A</variation>
    <location>
        <position position="1039"/>
    </location>
</feature>
<feature type="mutagenesis site" description="S3b fragment has 2.4-fold increased affinity for collagen." evidence="8">
    <original>F</original>
    <variation>A</variation>
    <location>
        <position position="1062"/>
    </location>
</feature>
<feature type="mutagenesis site" description="S3b fragment has 10-fold decreased affinity for collagen." evidence="8">
    <original>T</original>
    <variation>A</variation>
    <location>
        <position position="1067"/>
    </location>
</feature>
<feature type="mutagenesis site" description="S3b fragment has 12-fold decreased affinity for collagen." evidence="8">
    <original>Y</original>
    <variation>A</variation>
    <location>
        <position position="1080"/>
    </location>
</feature>
<feature type="mutagenesis site" description="S3b fragment has 2.2-fold increased affinity for collagen." evidence="8">
    <original>V</original>
    <variation>A</variation>
    <location>
        <position position="1088"/>
    </location>
</feature>
<feature type="mutagenesis site" description="S3b fragment has 5-fold decreased affinity for collagen." evidence="8">
    <original>L</original>
    <variation>A</variation>
    <location>
        <position position="1102"/>
    </location>
</feature>
<feature type="mutagenesis site" description="S3b fragment has no collagen binding." evidence="8">
    <original>Y</original>
    <variation>A</variation>
    <variation>S</variation>
    <location>
        <position position="1104"/>
    </location>
</feature>
<feature type="mutagenesis site" description="S3b fragment has 12-fold decreased affinity for collagen." evidence="8">
    <original>Y</original>
    <variation>F</variation>
    <location>
        <position position="1104"/>
    </location>
</feature>
<feature type="mutagenesis site" description="S3b fragment has 40-fold decreased affinity for collagen." evidence="8">
    <original>Y</original>
    <variation>A</variation>
    <location>
        <position position="1106"/>
    </location>
</feature>
<feature type="sequence conflict" description="In Ref. 2; BAA86030." evidence="33" ref="2">
    <original>F</original>
    <variation>V</variation>
    <location>
        <position position="606"/>
    </location>
</feature>
<feature type="sequence conflict" description="In Ref. 2; BAA86030." evidence="33" ref="2">
    <original>EYQN</original>
    <variation>DYQT</variation>
    <location>
        <begin position="656"/>
        <end position="659"/>
    </location>
</feature>
<feature type="sequence conflict" description="In Ref. 2; BAA86030." evidence="33" ref="2">
    <original>GD</original>
    <variation>VY</variation>
    <location>
        <begin position="836"/>
        <end position="837"/>
    </location>
</feature>
<feature type="helix" evidence="59">
    <location>
        <begin position="121"/>
        <end position="124"/>
    </location>
</feature>
<feature type="helix" evidence="59">
    <location>
        <begin position="129"/>
        <end position="137"/>
    </location>
</feature>
<feature type="helix" evidence="59">
    <location>
        <begin position="141"/>
        <end position="143"/>
    </location>
</feature>
<feature type="turn" evidence="59">
    <location>
        <begin position="145"/>
        <end position="148"/>
    </location>
</feature>
<feature type="helix" evidence="59">
    <location>
        <begin position="152"/>
        <end position="157"/>
    </location>
</feature>
<feature type="helix" evidence="59">
    <location>
        <begin position="161"/>
        <end position="177"/>
    </location>
</feature>
<feature type="helix" evidence="59">
    <location>
        <begin position="186"/>
        <end position="202"/>
    </location>
</feature>
<feature type="helix" evidence="57">
    <location>
        <begin position="204"/>
        <end position="206"/>
    </location>
</feature>
<feature type="helix" evidence="59">
    <location>
        <begin position="207"/>
        <end position="210"/>
    </location>
</feature>
<feature type="helix" evidence="59">
    <location>
        <begin position="212"/>
        <end position="215"/>
    </location>
</feature>
<feature type="helix" evidence="59">
    <location>
        <begin position="216"/>
        <end position="218"/>
    </location>
</feature>
<feature type="helix" evidence="59">
    <location>
        <begin position="219"/>
        <end position="227"/>
    </location>
</feature>
<feature type="helix" evidence="57">
    <location>
        <begin position="229"/>
        <end position="231"/>
    </location>
</feature>
<feature type="helix" evidence="59">
    <location>
        <begin position="236"/>
        <end position="251"/>
    </location>
</feature>
<feature type="helix" evidence="59">
    <location>
        <begin position="256"/>
        <end position="260"/>
    </location>
</feature>
<feature type="helix" evidence="59">
    <location>
        <begin position="263"/>
        <end position="271"/>
    </location>
</feature>
<feature type="helix" evidence="59">
    <location>
        <begin position="273"/>
        <end position="276"/>
    </location>
</feature>
<feature type="helix" evidence="59">
    <location>
        <begin position="280"/>
        <end position="301"/>
    </location>
</feature>
<feature type="strand" evidence="55">
    <location>
        <begin position="302"/>
        <end position="304"/>
    </location>
</feature>
<feature type="helix" evidence="59">
    <location>
        <begin position="306"/>
        <end position="308"/>
    </location>
</feature>
<feature type="turn" evidence="59">
    <location>
        <begin position="310"/>
        <end position="313"/>
    </location>
</feature>
<feature type="helix" evidence="59">
    <location>
        <begin position="316"/>
        <end position="326"/>
    </location>
</feature>
<feature type="turn" evidence="59">
    <location>
        <begin position="333"/>
        <end position="335"/>
    </location>
</feature>
<feature type="helix" evidence="59">
    <location>
        <begin position="336"/>
        <end position="349"/>
    </location>
</feature>
<feature type="helix" evidence="59">
    <location>
        <begin position="350"/>
        <end position="352"/>
    </location>
</feature>
<feature type="helix" evidence="59">
    <location>
        <begin position="356"/>
        <end position="370"/>
    </location>
</feature>
<feature type="helix" evidence="59">
    <location>
        <begin position="374"/>
        <end position="386"/>
    </location>
</feature>
<feature type="strand" evidence="59">
    <location>
        <begin position="394"/>
        <end position="396"/>
    </location>
</feature>
<feature type="helix" evidence="62">
    <location>
        <begin position="399"/>
        <end position="410"/>
    </location>
</feature>
<feature type="strand" evidence="62">
    <location>
        <begin position="413"/>
        <end position="417"/>
    </location>
</feature>
<feature type="turn" evidence="62">
    <location>
        <begin position="418"/>
        <end position="421"/>
    </location>
</feature>
<feature type="strand" evidence="62">
    <location>
        <begin position="422"/>
        <end position="426"/>
    </location>
</feature>
<feature type="helix" evidence="62">
    <location>
        <begin position="432"/>
        <end position="453"/>
    </location>
</feature>
<feature type="strand" evidence="62">
    <location>
        <begin position="459"/>
        <end position="462"/>
    </location>
</feature>
<feature type="helix" evidence="62">
    <location>
        <begin position="464"/>
        <end position="466"/>
    </location>
</feature>
<feature type="strand" evidence="62">
    <location>
        <begin position="467"/>
        <end position="475"/>
    </location>
</feature>
<feature type="helix" evidence="62">
    <location>
        <begin position="476"/>
        <end position="481"/>
    </location>
</feature>
<feature type="helix" evidence="56">
    <location>
        <begin position="482"/>
        <end position="485"/>
    </location>
</feature>
<feature type="strand" evidence="63">
    <location>
        <begin position="491"/>
        <end position="493"/>
    </location>
</feature>
<feature type="strand" evidence="62">
    <location>
        <begin position="495"/>
        <end position="497"/>
    </location>
</feature>
<feature type="helix" evidence="62">
    <location>
        <begin position="498"/>
        <end position="500"/>
    </location>
</feature>
<feature type="strand" evidence="62">
    <location>
        <begin position="502"/>
        <end position="506"/>
    </location>
</feature>
<feature type="turn" evidence="62">
    <location>
        <begin position="510"/>
        <end position="512"/>
    </location>
</feature>
<feature type="helix" evidence="62">
    <location>
        <begin position="517"/>
        <end position="533"/>
    </location>
</feature>
<feature type="helix" evidence="62">
    <location>
        <begin position="543"/>
        <end position="545"/>
    </location>
</feature>
<feature type="turn" evidence="62">
    <location>
        <begin position="547"/>
        <end position="550"/>
    </location>
</feature>
<feature type="helix" evidence="62">
    <location>
        <begin position="551"/>
        <end position="561"/>
    </location>
</feature>
<feature type="strand" evidence="62">
    <location>
        <begin position="566"/>
        <end position="568"/>
    </location>
</feature>
<feature type="helix" evidence="62">
    <location>
        <begin position="574"/>
        <end position="582"/>
    </location>
</feature>
<feature type="helix" evidence="62">
    <location>
        <begin position="585"/>
        <end position="587"/>
    </location>
</feature>
<feature type="helix" evidence="62">
    <location>
        <begin position="591"/>
        <end position="595"/>
    </location>
</feature>
<feature type="strand" evidence="62">
    <location>
        <begin position="601"/>
        <end position="603"/>
    </location>
</feature>
<feature type="helix" evidence="62">
    <location>
        <begin position="606"/>
        <end position="620"/>
    </location>
</feature>
<feature type="helix" evidence="62">
    <location>
        <begin position="622"/>
        <end position="633"/>
    </location>
</feature>
<feature type="helix" evidence="62">
    <location>
        <begin position="637"/>
        <end position="649"/>
    </location>
</feature>
<feature type="helix" evidence="62">
    <location>
        <begin position="651"/>
        <end position="666"/>
    </location>
</feature>
<feature type="turn" evidence="62">
    <location>
        <begin position="667"/>
        <end position="670"/>
    </location>
</feature>
<feature type="helix" evidence="62">
    <location>
        <begin position="678"/>
        <end position="681"/>
    </location>
</feature>
<feature type="helix" evidence="62">
    <location>
        <begin position="689"/>
        <end position="700"/>
    </location>
</feature>
<feature type="strand" evidence="62">
    <location>
        <begin position="703"/>
        <end position="711"/>
    </location>
</feature>
<feature type="strand" evidence="62">
    <location>
        <begin position="716"/>
        <end position="728"/>
    </location>
</feature>
<feature type="helix" evidence="62">
    <location>
        <begin position="732"/>
        <end position="752"/>
    </location>
</feature>
<feature type="helix" evidence="62">
    <location>
        <begin position="756"/>
        <end position="760"/>
    </location>
</feature>
<feature type="strand" evidence="62">
    <location>
        <begin position="762"/>
        <end position="770"/>
    </location>
</feature>
<feature type="strand" evidence="62">
    <location>
        <begin position="775"/>
        <end position="786"/>
    </location>
</feature>
<feature type="strand" evidence="58">
    <location>
        <begin position="806"/>
        <end position="809"/>
    </location>
</feature>
<feature type="strand" evidence="58">
    <location>
        <begin position="812"/>
        <end position="817"/>
    </location>
</feature>
<feature type="strand" evidence="60">
    <location>
        <begin position="824"/>
        <end position="826"/>
    </location>
</feature>
<feature type="strand" evidence="58">
    <location>
        <begin position="828"/>
        <end position="834"/>
    </location>
</feature>
<feature type="strand" evidence="58">
    <location>
        <begin position="836"/>
        <end position="838"/>
    </location>
</feature>
<feature type="strand" evidence="58">
    <location>
        <begin position="840"/>
        <end position="849"/>
    </location>
</feature>
<feature type="strand" evidence="58">
    <location>
        <begin position="854"/>
        <end position="864"/>
    </location>
</feature>
<feature type="strand" evidence="58">
    <location>
        <begin position="869"/>
        <end position="879"/>
    </location>
</feature>
<feature type="helix" evidence="61">
    <location>
        <begin position="897"/>
        <end position="899"/>
    </location>
</feature>
<feature type="strand" evidence="61">
    <location>
        <begin position="910"/>
        <end position="915"/>
    </location>
</feature>
<feature type="strand" evidence="61">
    <location>
        <begin position="920"/>
        <end position="927"/>
    </location>
</feature>
<feature type="strand" evidence="61">
    <location>
        <begin position="929"/>
        <end position="941"/>
    </location>
</feature>
<feature type="strand" evidence="61">
    <location>
        <begin position="945"/>
        <end position="951"/>
    </location>
</feature>
<feature type="strand" evidence="61">
    <location>
        <begin position="954"/>
        <end position="957"/>
    </location>
</feature>
<feature type="strand" evidence="61">
    <location>
        <begin position="959"/>
        <end position="961"/>
    </location>
</feature>
<feature type="strand" evidence="61">
    <location>
        <begin position="963"/>
        <end position="965"/>
    </location>
</feature>
<feature type="strand" evidence="61">
    <location>
        <begin position="968"/>
        <end position="975"/>
    </location>
</feature>
<feature type="strand" evidence="61">
    <location>
        <begin position="977"/>
        <end position="987"/>
    </location>
</feature>
<feature type="strand" evidence="61">
    <location>
        <begin position="992"/>
        <end position="1000"/>
    </location>
</feature>
<feature type="helix" evidence="54">
    <location>
        <begin position="1007"/>
        <end position="1018"/>
    </location>
</feature>
<feature type="strand" evidence="54">
    <location>
        <begin position="1024"/>
        <end position="1026"/>
    </location>
</feature>
<feature type="strand" evidence="54">
    <location>
        <begin position="1029"/>
        <end position="1033"/>
    </location>
</feature>
<feature type="strand" evidence="54">
    <location>
        <begin position="1039"/>
        <end position="1048"/>
    </location>
</feature>
<feature type="strand" evidence="54">
    <location>
        <begin position="1050"/>
        <end position="1070"/>
    </location>
</feature>
<feature type="strand" evidence="54">
    <location>
        <begin position="1082"/>
        <end position="1084"/>
    </location>
</feature>
<feature type="strand" evidence="54">
    <location>
        <begin position="1087"/>
        <end position="1094"/>
    </location>
</feature>
<feature type="strand" evidence="54">
    <location>
        <begin position="1096"/>
        <end position="1108"/>
    </location>
</feature>
<feature type="strand" evidence="54">
    <location>
        <begin position="1110"/>
        <end position="1117"/>
    </location>
</feature>
<name>COLG_HATHI</name>
<reference key="1">
    <citation type="journal article" date="1999" name="J. Bacteriol.">
        <title>Gene duplication and multiplicity of collagenases in Clostridium histolyticum.</title>
        <authorList>
            <person name="Matsushita O."/>
            <person name="Jung C.-M."/>
            <person name="Katayama S."/>
            <person name="Minami J."/>
            <person name="Takahashi Y."/>
            <person name="Okabe A."/>
        </authorList>
    </citation>
    <scope>NUCLEOTIDE SEQUENCE [GENOMIC DNA]</scope>
    <scope>PROTEIN SEQUENCE OF 111-150</scope>
    <scope>FUNCTION</scope>
    <scope>SUBCELLULAR LOCATION</scope>
    <scope>INDUCTION</scope>
    <scope>DOMAIN</scope>
    <scope>PROTEIN CLEAVAGE</scope>
    <source>
        <strain>ATCC 19401 / DSM 2158 / JCM 1403 / NCIMB 503 / NCTC 503</strain>
    </source>
</reference>
<reference key="2">
    <citation type="submission" date="1999-04" db="EMBL/GenBank/DDBJ databases">
        <title>Class 1 collagenase.</title>
        <authorList>
            <person name="Hosaka T."/>
            <person name="Yamato I."/>
        </authorList>
    </citation>
    <scope>NUCLEOTIDE SEQUENCE [GENOMIC DNA]</scope>
    <source>
        <strain>ATCC 19401 / DSM 2158 / JCM 1403 / NCIMB 503 / NCTC 503</strain>
    </source>
</reference>
<reference key="3">
    <citation type="journal article" date="1984" name="Biochemistry">
        <title>Characterization of the individual collagenases from Clostridium histolyticum.</title>
        <authorList>
            <person name="Bond M.D."/>
            <person name="Van Wart H.E."/>
        </authorList>
    </citation>
    <scope>COFACTOR</scope>
    <scope>CLASSIFICATION</scope>
</reference>
<reference key="4">
    <citation type="journal article" date="1985" name="Biochemistry">
        <title>Mode of hydrolysis of collagen-like peptides by class I and class II Clostridium histolyticum collagenases: evidence for both endopeptidase and tripeptidylcarboxypeptidase activities.</title>
        <authorList>
            <person name="Mookhtiar K.A."/>
            <person name="Steinbrink D.R."/>
            <person name="Van Wart H.E."/>
        </authorList>
    </citation>
    <scope>FUNCTION</scope>
    <scope>CATALYTIC ACTIVITY</scope>
</reference>
<reference key="5">
    <citation type="journal article" date="1993" name="J. Urol.">
        <title>Collagenase versus placebo in the treatment of Peyronie's disease: a double-blind study.</title>
        <authorList>
            <person name="Gelbard M.K."/>
            <person name="James K."/>
            <person name="Riach P."/>
            <person name="Dorey F."/>
        </authorList>
    </citation>
    <scope>PRELIMINARY STUDIES FOR PHARMACEUTICAL USE FOR TREATMENT OF PEYRONIE DISEASE</scope>
</reference>
<reference key="6">
    <citation type="journal article" date="1998" name="Placenta">
        <title>The potential of collagenase as a new therapy for separation of human retained placenta: hydrolytic potency on human, equine and bovine placentae.</title>
        <authorList>
            <person name="Fecteau K.A."/>
            <person name="Haffner J.C."/>
            <person name="Eiler H."/>
        </authorList>
    </citation>
    <scope>BIOTECHNOLOGY USE IN TREATING RETAINED PLACENTA</scope>
</reference>
<reference key="7">
    <citation type="journal article" date="2000" name="J. Hand Surg. Am.">
        <title>Enzyme injection as nonsurgical treatment of Dupuytren's disease.</title>
        <authorList>
            <person name="Badalamente M.A."/>
            <person name="Hurst L.C."/>
        </authorList>
    </citation>
    <scope>PHARMACEUTICAL USE FOR TREATMENT OF DUPUYTREN DISEASE</scope>
</reference>
<reference key="8">
    <citation type="journal article" date="2001" name="Connect. Tissue Res.">
        <title>Collagen-binding domain of a Clostridium histolyticum collagenase exhibits a broad substrate spectrum both in vitro and in vivo.</title>
        <authorList>
            <person name="Toyoshima T."/>
            <person name="Matsushita O."/>
            <person name="Minami J."/>
            <person name="Nishi N."/>
            <person name="Okabe A."/>
            <person name="Itano T."/>
        </authorList>
    </citation>
    <scope>FUNCTION</scope>
    <scope>DOMAIN</scope>
    <scope>COLLAGEN-BINDING</scope>
</reference>
<reference key="9">
    <citation type="journal article" date="2001" name="J. Biol. Chem.">
        <title>Substrate recognition by the collagen-binding domain of Clostridium histolyticum class I collagenase.</title>
        <authorList>
            <person name="Matsushita O."/>
            <person name="Koide T."/>
            <person name="Kobayashi R."/>
            <person name="Nagata K."/>
            <person name="Okabe A."/>
        </authorList>
    </citation>
    <scope>FUNCTION</scope>
    <scope>POSSIBLE ACTIVE SITE</scope>
    <scope>DOMAIN</scope>
    <scope>COLLAGEN-BINDING</scope>
    <scope>MUTAGENESIS OF GLU-524</scope>
</reference>
<reference key="10">
    <citation type="journal article" date="2008" name="Transplant. Proc.">
        <title>Development and characterization of a collagen degradation assay to assess purified collagenase used in islet isolation.</title>
        <authorList>
            <person name="McCarthy R.C."/>
            <person name="Spurlin B."/>
            <person name="Wright M.J."/>
            <person name="Breite A.G."/>
            <person name="Sturdevant L.K."/>
            <person name="Dwulet C.S."/>
            <person name="Dwulet F.E."/>
        </authorList>
    </citation>
    <scope>FUNCTION</scope>
    <scope>SUBCELLULAR LOCATION</scope>
    <scope>BIOTECHNOLOGY FOR ISOLATION OF PANCREAS ISLET CELLS</scope>
</reference>
<reference key="11">
    <citation type="journal article" date="2009" name="Biol. Chem.">
        <title>Biochemical characterization of the catalytic domains of three different Clostridial collagenases.</title>
        <authorList>
            <person name="Eckhard U."/>
            <person name="Schoenauer E."/>
            <person name="Ducka P."/>
            <person name="Briza P."/>
            <person name="Nuess D."/>
            <person name="Brandstetter H."/>
        </authorList>
    </citation>
    <scope>FUNCTION</scope>
    <scope>CATALYTIC ACTIVITY</scope>
    <scope>ACTIVITY REGULATION</scope>
    <scope>BIOPHYSICOCHEMICAL PROPERTIES</scope>
    <scope>DOMAIN</scope>
</reference>
<reference key="12">
    <citation type="journal article" date="2009" name="J. Biol. Chem.">
        <title>Unidirectional binding of clostridial collagenase to triple helical substrates.</title>
        <authorList>
            <person name="Philominathan S.T."/>
            <person name="Koide T."/>
            <person name="Hamada K."/>
            <person name="Yasui H."/>
            <person name="Seifert S."/>
            <person name="Matsushita O."/>
            <person name="Sakon J."/>
        </authorList>
    </citation>
    <scope>COLLAGEN BINDING BY S3B DOMAIN</scope>
</reference>
<reference key="13">
    <citation type="journal article" date="2009" name="J. Wound Ostomy Continence Nurs.">
        <title>Collagenase Santyl ointment: a selective agent for wound debridement.</title>
        <authorList>
            <person name="Shi L."/>
            <person name="Carson D."/>
        </authorList>
    </citation>
    <scope>PHARMACEUTICAL USES FOR WOUND TREATMENT AND BURN DEBRIDEMENT</scope>
</reference>
<reference key="14">
    <citation type="journal article" date="2009" name="N. Engl. J. Med.">
        <title>Injectable collagenase clostridium histolyticum for Dupuytren's contracture.</title>
        <authorList>
            <consortium name="CORD I Study Group"/>
            <person name="Hurst L.C."/>
            <person name="Badalamente M.A."/>
            <person name="Hentz V.R."/>
            <person name="Hotchkiss R.N."/>
            <person name="Kaplan F.T."/>
            <person name="Meals R.A."/>
            <person name="Smith T.M."/>
            <person name="Rodzvilla J."/>
        </authorList>
    </citation>
    <scope>PHARMACEUTICAL USES FOR TREATMENT OF DUPUYTREN DISEASE</scope>
</reference>
<reference key="15">
    <citation type="journal article" date="2011" name="Transplant. Proc.">
        <title>Characterization and functional assessment of Clostridium histolyticum class I (C1) collagenases and the synergistic degradation of native collagen in enzyme mixtures containing class II (C2) collagenase.</title>
        <authorList>
            <person name="Breite A.G."/>
            <person name="McCarthy R.C."/>
            <person name="Dwulet F.E."/>
        </authorList>
    </citation>
    <scope>IDENTIFICATION BY MASS SPECTROMETRY</scope>
    <scope>FUNCTION</scope>
    <scope>SUBCELLULAR LOCATION</scope>
    <scope>PROTEIN CLEAVAGE</scope>
    <scope>BIOTECHNOLOGY FOR ISOLATION OF PANCREAS ISLET CELLS</scope>
</reference>
<reference key="16">
    <citation type="journal article" date="2012" name="Protein Sci.">
        <title>Bacterial collagen-binding domain targets undertwisted regions of collagen.</title>
        <authorList>
            <person name="Philominathan S.T."/>
            <person name="Koide T."/>
            <person name="Matsushita O."/>
            <person name="Sakon J."/>
        </authorList>
    </citation>
    <scope>COLLAGEN BINDING BY S3B DOMAIN</scope>
</reference>
<reference key="17">
    <citation type="journal article" date="2014" name="J. Proteomics">
        <title>Proteomic protease specificity profiling of clostridial collagenases reveals their intrinsic nature as dedicated degraders of collagen.</title>
        <authorList>
            <person name="Eckhard U."/>
            <person name="Huesgen P.F."/>
            <person name="Brandstetter H."/>
            <person name="Overall C.M."/>
        </authorList>
    </citation>
    <scope>FUNCTION</scope>
    <scope>CATALYTIC ACTIVITY</scope>
</reference>
<reference key="18">
    <citation type="journal article" date="2015" name="BJU Int.">
        <title>Clinical efficacy of collagenase Clostridium histolyticum in the treatment of Peyronie's disease by subgroup: results from two large, double-blind, randomized, placebo-controlled, phase III studies.</title>
        <authorList>
            <person name="Lipshultz L.I."/>
            <person name="Goldstein I."/>
            <person name="Seftel A.D."/>
            <person name="Kaufman G.J."/>
            <person name="Smith T.M."/>
            <person name="Tursi J.P."/>
            <person name="Burnett A.L."/>
        </authorList>
    </citation>
    <scope>PHARMACEUTICAL USE FOR TREATMENT OF PEYRONIE DISEASE</scope>
</reference>
<reference key="19">
    <citation type="journal article" date="2017" name="J. Am. Chem. Soc.">
        <title>Discovery of a potent inhibitor class with high selectivity toward clostridial collagenases.</title>
        <authorList>
            <person name="Schoenauer E."/>
            <person name="Kany A.M."/>
            <person name="Haupenthal J."/>
            <person name="Huesecken K."/>
            <person name="Hoppe I.J."/>
            <person name="Voos K."/>
            <person name="Yahiaoui S."/>
            <person name="Elsaesser B."/>
            <person name="Ducho C."/>
            <person name="Brandstetter H."/>
            <person name="Hartmann R.W."/>
        </authorList>
    </citation>
    <scope>FUNCTION</scope>
    <scope>ACTIVITY REGULATION</scope>
    <scope>BIOTECHNOLOGY FOR ANTI-INFECTIVE AGENTS</scope>
</reference>
<reference evidence="41 42" key="20">
    <citation type="journal article" date="2003" name="EMBO J.">
        <title>A bacterial collagen-binding domain with novel calcium-binding motif controls domain orientation.</title>
        <authorList>
            <person name="Wilson J.J."/>
            <person name="Matsushita O."/>
            <person name="Okabe A."/>
            <person name="Sakon J."/>
        </authorList>
    </citation>
    <scope>X-RAY CRYSTALLOGRAPHY (1.00 ANGSTROMS) OF 1003-1118 IN THE PRESENCE AND ABSENCE OF CALCIUM</scope>
    <scope>CALCIUM COFACTOR</scope>
    <scope>DOMAIN</scope>
    <scope>COLLAGEN-BINDING</scope>
    <scope>MUTAGENESIS OF ARG-1039; PHE-1062; THR-1067; TYR-1080; VAL-1088; LEU-1102; TYR-1104 AND TYR-1106</scope>
</reference>
<reference evidence="43" key="21">
    <citation type="submission" date="2006-12" db="PDB data bank">
        <title>Induction of stable beta-sheet by Ca2+ in Clostridial collagen binding domain.</title>
        <authorList>
            <person name="Philominathan S.T.L."/>
            <person name="Wilson J.J."/>
            <person name="Matsushita O."/>
            <person name="Sakon J."/>
        </authorList>
    </citation>
    <scope>X-RAY CRYSTALLOGRAPHY (1.35 ANGSTROMS) OF 1003-1118 IN COMPLEX WITH CALCIUM</scope>
</reference>
<reference evidence="47" key="22">
    <citation type="journal article" date="2011" name="Biol. Chem.">
        <title>Polycystic kidney disease-like domains of clostridial collagenases and their role in collagen recruitment.</title>
        <authorList>
            <person name="Eckhard U."/>
            <person name="Brandstetter H."/>
        </authorList>
    </citation>
    <scope>X-RAY CRYSTALLOGRAPHY (1.18 ANGSTROMS) OF 799-880</scope>
    <scope>DOMAIN</scope>
</reference>
<reference evidence="44 45 46 47" key="23">
    <citation type="journal article" date="2011" name="Nat. Struct. Mol. Biol.">
        <title>Structure of collagenase G reveals a chew-and-digest mechanism of bacterial collagenolysis.</title>
        <authorList>
            <person name="Eckhard U."/>
            <person name="Schonauer E."/>
            <person name="Nuss D."/>
            <person name="Brandstetter H."/>
        </authorList>
    </citation>
    <scope>X-RAY CRYSTALLOGRAPHY (1.18 ANGSTROMS) OF 799-880</scope>
    <scope>X-RAY CRYSTALLOGRAPHY (2.80 ANGSTROMS) OF 119-880 IN COMPLEX WITH AND WITHOUT ZINC</scope>
    <scope>X-RAY CRYSTALLOGRAPHY (3.25 ANGSTROMS) OF 119-880 IN COMPLEX WITH ZINC AND AN INHIBITOR</scope>
    <scope>FUNCTION</scope>
    <scope>REACTION MECHANISM</scope>
    <scope>ZINC COFACTOR</scope>
    <scope>ACTIVITY REGULATION</scope>
    <scope>DOMAIN</scope>
    <scope>MUTAGENESIS OF 389-GLY--VAL-397</scope>
</reference>
<reference evidence="50" key="24">
    <citation type="journal article" date="2013" name="J. Bacteriol.">
        <title>Structural comparison of ColH and ColG collagen-binding domains from Clostridium histolyticum.</title>
        <authorList>
            <person name="Bauer R."/>
            <person name="Wilson J.J."/>
            <person name="Philominathan S.T."/>
            <person name="Davis D."/>
            <person name="Matsushita O."/>
            <person name="Sakon J."/>
        </authorList>
    </citation>
    <scope>X-RAY CRYSTALLOGRAPHY (1.35 ANGSTROMS) OF 1006-1118 AND 1002-1118 IN COMPLEX WITH CALCIUM</scope>
    <scope>COFACTOR</scope>
    <scope>DOMAIN</scope>
    <scope>COLLAGEN-BINDING</scope>
</reference>
<reference evidence="48 49" key="25">
    <citation type="journal article" date="2013" name="J. Biol. Chem.">
        <title>Structural basis for activity regulation and substrate preference of clostridial collagenases G, H, and T.</title>
        <authorList>
            <person name="Eckhard U."/>
            <person name="Schonauer E."/>
            <person name="Brandstetter H."/>
        </authorList>
    </citation>
    <scope>X-RAY CRYSTALLOGRAPHY (0.99 ANGSTROMS) OF 792-880 IN COMPLEX WITH CALCIUM</scope>
    <scope>X-RAY CRYSTALLOGRAPHY (2.19 ANGSTROMS) OF 119-789 IN COMPLEX WITH ZINC</scope>
    <scope>FUNCTION</scope>
    <scope>COFACTOR</scope>
    <scope>DOMAIN</scope>
</reference>
<reference evidence="51 52" key="26">
    <citation type="journal article" date="2015" name="Acta Crystallogr. D">
        <title>Structures of three polycystic kidney disease-like domains from Clostridium histolyticum collagenases ColG and ColH.</title>
        <authorList>
            <person name="Bauer R."/>
            <person name="Janowska K."/>
            <person name="Taylor K."/>
            <person name="Jordan B."/>
            <person name="Gann S."/>
            <person name="Janowski T."/>
            <person name="Latimer E.C."/>
            <person name="Matsushita O."/>
            <person name="Sakon J."/>
        </authorList>
    </citation>
    <scope>X-RAY CRYSTALLOGRAPHY (1.40 ANGSTROMS) OF 797-881</scope>
    <scope>DOMAIN</scope>
</reference>
<reference evidence="53" key="27">
    <citation type="submission" date="2016-03" db="PDB data bank">
        <title>Crystal structure of the Clostridium histolyticum ColG tandem collagen-binding domain s3as3b in the presence of calcium at 1.9 Angstrom resolution.</title>
        <authorList>
            <person name="Janowska K."/>
            <person name="Bauer R."/>
            <person name="Roeser R."/>
            <person name="Sakon J."/>
            <person name="Matsushita O."/>
        </authorList>
    </citation>
    <scope>X-RAY CRYSTALLOGRAPHY (1.90 ANGSTROMS) OF 883-1118 IN COMPLEX WITH CALCIUM</scope>
    <scope>COFACTOR</scope>
    <scope>DOMAIN</scope>
</reference>
<organism>
    <name type="scientific">Hathewaya histolytica</name>
    <name type="common">Clostridium histolyticum</name>
    <dbReference type="NCBI Taxonomy" id="1498"/>
    <lineage>
        <taxon>Bacteria</taxon>
        <taxon>Bacillati</taxon>
        <taxon>Bacillota</taxon>
        <taxon>Clostridia</taxon>
        <taxon>Eubacteriales</taxon>
        <taxon>Clostridiaceae</taxon>
        <taxon>Hathewaya</taxon>
    </lineage>
</organism>
<comment type="function">
    <text evidence="6 7 9 10 14 15 18 19 22 23 27">Clostridial collagenases are among the most efficient degraders of eukaryotic collagen known; saprophytes use collagen as a carbon source while pathogens additionally digest collagen to aid in host colonization. Has both tripeptidylcarboxypeptidase on Gly-X-Y and endopeptidase activities; the endopeptidase cuts within the triple helix region of collagen while tripeptidylcarboxypeptidase successively digests the exposed ends, thus clostridial collagenases can digest large sections of collagen (PubMed:3002446). Active on soluble type I collagen, insoluble collagen, azocoll, soluble PZ-peptide (all collagenase substrates) and gelatin (PubMed:9922257). The full-length protein has collagenase activity, while the in vivo derived C-terminally truncated shorter versions only act on gelatin (PubMed:9922257). In vitro digestion of soluble calf skin collagen fibrils requires both ColG and ColH; ColG forms missing the second collagen-binding domain are also synergistic with ColH, although their overall efficiency is decreased (PubMed:18374061, PubMed:22099748). The activator domain (residues 119-388) and catalytic subdomain (389-670) open and close around substrate using a Gly-rich hinge (387-397), allowing digestion when the protein is closed (PubMed:21947205, PubMed:23703618). Binding of collagen requires Ca(2+) and is inhibited by EGTA; the collagen-binding domain (CBD, S3a plus S3b) specifically recognizes the triple-helical conformation made by 3 collagen protein chains in the triple-helical region (PubMed:11121400). Isolated CBD (S3a plus S3b) binds collagen fibrils and sheets of many tissues (PubMed:11913772).</text>
</comment>
<comment type="catalytic activity">
    <reaction evidence="19 23 35">
        <text>Digestion of native collagen in the triple helical region at Xaa-|-Gly bonds. With synthetic peptides, a preference is shown for Gly at P3 and P1', Pro and Ala at P2 and P2', and hydroxyproline, Ala or Arg at P3'.</text>
        <dbReference type="EC" id="3.4.24.3"/>
    </reaction>
</comment>
<comment type="cofactor">
    <cofactor evidence="8 17 18 24 28 29">
        <name>Ca(2+)</name>
        <dbReference type="ChEBI" id="CHEBI:29108"/>
    </cofactor>
    <text evidence="8 17 24 28 29">Binds about 7 Ca(2+) per subunit (PubMed:6087888). The metallopeptidase and PKD domains each bind 1 Ca(2+), while each CDB binds 2 (PubMed:12682007, PubMed:23144249, Ref.21, Ref.27).</text>
</comment>
<comment type="cofactor">
    <cofactor evidence="14 18 24">
        <name>Zn(2+)</name>
        <dbReference type="ChEBI" id="CHEBI:29105"/>
    </cofactor>
    <text evidence="14 18 24">Binds 1 catalytic Zn(2+) per subunit, a Zn-free form has been crystallized (PubMed:21947205).</text>
</comment>
<comment type="activity regulation">
    <text evidence="10 14 22">Inhibited by 1-10-phenanthroline (PubMed:18937627). Inhibited by peptidomimetic isoamyl-phosphonyl-Gly-Pro-Ala, which binds to Zn(2+) (PubMed:21947205). Inhibited by broad-spectrum zinc metalloprotease inhibitor batimastat (PubMed:28820255). N-aryl mercaptoacetamide-based inhibitors have been isolated that act on clostridial collagenases with submicromolar affinity while having negligibile activity on human collagenases (PubMed:28820255).</text>
</comment>
<comment type="biophysicochemical properties">
    <kinetics>
        <KM evidence="10">0.84 mM for furylacryloyl-Leu-Gly-Pro-Ala (FALGPA)</KM>
        <Vmax evidence="10">0.0852 umol/min/mg enzyme</Vmax>
        <text evidence="10">kcat is 0.11/sec, using a catalytic fragment (119-790) on an artificial substrate.</text>
    </kinetics>
</comment>
<comment type="subcellular location">
    <subcellularLocation>
        <location evidence="9 15 27">Secreted</location>
    </subcellularLocation>
</comment>
<comment type="induction">
    <text evidence="27">RNA levels are high in late logarithmic phase.</text>
</comment>
<comment type="domain">
    <text evidence="6 7 8 10 11 14 16 17 18 21 34 36 37 40">The mature protein has 4 domains; a metalloprotease domain (S1, approximately residues 111-786), S2 (877-882, equivalent to PKD), and 2 collagen-binding domains (CBD) S3a (997-1003) and S3b (1008-1118) (PubMed:11121400, PubMed:9922257). The S1 domain has collagen hydrolytic activity (PubMed:11121400, PubMed:18937627). The metalloprotease S1 domain is composed of 3 subdomains which together resemble a saddle; an activator domain (residues 119-388), the catalytic peptidase subdomain (398-670) and a helper subdomain (679-790) joined by a Gly-rich hinge (387-397) (PubMed:21947205, PubMed:23703618). The S2 domain (799-880, PKD) is flexible within a larger structure (S1 plus S2, residues 119-880) (PubMed:21871007, PubMed:21947205). Binding to Ca(2+) renders the midsection of S2 more flexible; Ca(2+) binding confers thermostability (PubMed:25760606). S3a and S3b each have collagen-binding activity; collagen is bound more efficiently when both S3a and S3b are present (PubMed:11121400). CBD S3a plus S3b binds to many types of collagen in vitro and in vivo (PubMed:11913772). The structure of CBD S3b becomes more compact and thermostable when it is bound to Ca(2+) and its N-terminal linker (approximately residues 1008-1020) changes from an extended alpha-helix to a beta-sheet anchored to the rest of the CBD (PubMed:12682007, PubMed:23144249). S3b may act as a Ca(2+)-activated molecular switch to trigger domain reorientation (PubMed:12682007). Isolated CBD S3b binds unidirectionally to the C-terminus of the collagen triple helix via a surface cleft (PubMed:19208618, PubMed:23144249). The S3b domain binds preferentially to undertwisted segions of collagen (PubMed:22898990).</text>
</comment>
<comment type="PTM">
    <text evidence="15 27">Upon purification gives 67 kDa, 78 kDa, 82 kDa and 116 kDa (full-length) proteins all of which have the same N-terminus; only the longest form digests insoluble collagen (PubMed:9922257). At least 2 in vivo isolated forms (C1b and C1c) are missing the second collagen-binding domain, ending on Lys-1006 and Lys-1018 respectively (PubMed:22099748).</text>
</comment>
<comment type="biotechnology">
    <text evidence="33">Widely used for tissue dissociation due to their potent activity on connective tissue.</text>
</comment>
<comment type="biotechnology">
    <text evidence="9 15">A mix of ColG and ColH is used for isolation of pancreatic islet cells for subsequent transplantation.</text>
</comment>
<comment type="biotechnology">
    <text evidence="26">A mix of ColG and ColH has been used to allow release of retained placenta in cows and mares, and its use in humans has been proposed.</text>
</comment>
<comment type="biotechnology">
    <text evidence="22">N-aryl mercaptoacetamide-based inhibitors with submicromolar affinity for clostridial collagenases but negligibile activity on human collagenases have been discovered that may lead to promising anti-infective drugs against Clostridia (PubMed:28820255).</text>
</comment>
<comment type="pharmaceutical">
    <text evidence="13">SANTYL Ointment (Smith and Nephew, Inc.) is indicated for debriding chronic dermal ulcers and severely burned areas. It is unclear which of the collagenases from this bacteria is in the ointment.</text>
</comment>
<comment type="pharmaceutical">
    <text evidence="5 12 20 25">Xiaflex (Endo Pharmaceuticals, Inc.) is a mix of H.histolytica collagenases (ColG and ColH) used to treat both Dupuytren disease and Peyronie disease. Dupuytren disease is a progressive genetic disorder of pathologic collagen production and deposition under the skin of the hand that causes the fingers to be drawn into the palm, leading to flexion contractures of the joints, which can severely limit hand function. Injections of collagenase reduce these joint contractures (PubMed:10913202, PubMed:19726771). Peyronie disease (PD) is characterized by a disorganized, excessive deposition of collagen that forms a plaque within the penis. The plaque restricts lengthening on the affected side during erection, which can lead to penile curvature deformity, discomfort and erectile dysfunction, and can eventually lead to psychosocial effects such as depression and relationship difficulties. Studies have shown the clinical efficacy of collagenase injection for reducing penile curvature deformity and psychosocial symptoms (PubMed:25711400, PubMed:8417217).</text>
</comment>
<comment type="miscellaneous">
    <text evidence="33">Clostridial collagenases enable the bacteria to infiltrate and colonize host tissue, and contribute to gas gangrene (myonecrosis) pathogenesis.</text>
</comment>
<comment type="similarity">
    <text evidence="39 40">Belongs to the peptidase M9B family. Collagenase subfamily.</text>
</comment>